<reference key="1">
    <citation type="journal article" date="2006" name="J. Bacteriol.">
        <title>Chromosome rearrangement and diversification of Francisella tularensis revealed by the type B (OSU18) genome sequence.</title>
        <authorList>
            <person name="Petrosino J.F."/>
            <person name="Xiang Q."/>
            <person name="Karpathy S.E."/>
            <person name="Jiang H."/>
            <person name="Yerrapragada S."/>
            <person name="Liu Y."/>
            <person name="Gioia J."/>
            <person name="Hemphill L."/>
            <person name="Gonzalez A."/>
            <person name="Raghavan T.M."/>
            <person name="Uzman A."/>
            <person name="Fox G.E."/>
            <person name="Highlander S."/>
            <person name="Reichard M."/>
            <person name="Morton R.J."/>
            <person name="Clinkenbeard K.D."/>
            <person name="Weinstock G.M."/>
        </authorList>
    </citation>
    <scope>NUCLEOTIDE SEQUENCE [LARGE SCALE GENOMIC DNA]</scope>
    <source>
        <strain>OSU18</strain>
    </source>
</reference>
<sequence length="481" mass="52396">MSYIKKLRARLDSGEISAVELTKEYLAKIKEQDKRINSIITLCEAEALKEAEDADAIISAGKQGLLTGIPILHKDLFCTKGIRTTAASKMLDNFVAPYDSTVTKNCKDQGMVTLGKLNMDEFAMGSTNEYSYYGAVSNPWDLERVPGGSSGGSAAAVAAGFAPISTGSDTGGSVRQPASFCGLTAMKPSYGSTSRFGMVAFASSFDQAGIFGHYAEDVAIMLDAIAGECEFDSTCVGVKQNHFTQDLEKDISSKVIGVDESLIKDLPAQIQEAVSKTLDNFKKLGAEIKSVKVPDLKEALSTYYIITPAEAAANLARYDGIRYGYRNPEARDLDELYRKSRTDGFGAEVKRRIMIGNYVLASSQYDSYYNKAQQLRKVMTDQINQIFTQVDAIFMPASPSEAFKKGDKLDPVSAYLSDIYTIPANISGLPAIAFPIGFANNLPVGGQLMAKAFNDNILTQMVVQYQKHYGIEEFILQQARI</sequence>
<evidence type="ECO:0000255" key="1">
    <source>
        <dbReference type="HAMAP-Rule" id="MF_00120"/>
    </source>
</evidence>
<protein>
    <recommendedName>
        <fullName evidence="1">Glutamyl-tRNA(Gln) amidotransferase subunit A</fullName>
        <shortName evidence="1">Glu-ADT subunit A</shortName>
        <ecNumber evidence="1">6.3.5.7</ecNumber>
    </recommendedName>
</protein>
<keyword id="KW-0067">ATP-binding</keyword>
<keyword id="KW-0436">Ligase</keyword>
<keyword id="KW-0547">Nucleotide-binding</keyword>
<keyword id="KW-0648">Protein biosynthesis</keyword>
<proteinExistence type="inferred from homology"/>
<organism>
    <name type="scientific">Francisella tularensis subsp. holarctica (strain OSU18)</name>
    <dbReference type="NCBI Taxonomy" id="393011"/>
    <lineage>
        <taxon>Bacteria</taxon>
        <taxon>Pseudomonadati</taxon>
        <taxon>Pseudomonadota</taxon>
        <taxon>Gammaproteobacteria</taxon>
        <taxon>Thiotrichales</taxon>
        <taxon>Francisellaceae</taxon>
        <taxon>Francisella</taxon>
    </lineage>
</organism>
<gene>
    <name evidence="1" type="primary">gatA</name>
    <name type="ordered locus">FTH_1777</name>
</gene>
<feature type="chain" id="PRO_1000015833" description="Glutamyl-tRNA(Gln) amidotransferase subunit A">
    <location>
        <begin position="1"/>
        <end position="481"/>
    </location>
</feature>
<feature type="active site" description="Charge relay system" evidence="1">
    <location>
        <position position="74"/>
    </location>
</feature>
<feature type="active site" description="Charge relay system" evidence="1">
    <location>
        <position position="149"/>
    </location>
</feature>
<feature type="active site" description="Acyl-ester intermediate" evidence="1">
    <location>
        <position position="173"/>
    </location>
</feature>
<comment type="function">
    <text evidence="1">Allows the formation of correctly charged Gln-tRNA(Gln) through the transamidation of misacylated Glu-tRNA(Gln) in organisms which lack glutaminyl-tRNA synthetase. The reaction takes place in the presence of glutamine and ATP through an activated gamma-phospho-Glu-tRNA(Gln).</text>
</comment>
<comment type="catalytic activity">
    <reaction evidence="1">
        <text>L-glutamyl-tRNA(Gln) + L-glutamine + ATP + H2O = L-glutaminyl-tRNA(Gln) + L-glutamate + ADP + phosphate + H(+)</text>
        <dbReference type="Rhea" id="RHEA:17521"/>
        <dbReference type="Rhea" id="RHEA-COMP:9681"/>
        <dbReference type="Rhea" id="RHEA-COMP:9684"/>
        <dbReference type="ChEBI" id="CHEBI:15377"/>
        <dbReference type="ChEBI" id="CHEBI:15378"/>
        <dbReference type="ChEBI" id="CHEBI:29985"/>
        <dbReference type="ChEBI" id="CHEBI:30616"/>
        <dbReference type="ChEBI" id="CHEBI:43474"/>
        <dbReference type="ChEBI" id="CHEBI:58359"/>
        <dbReference type="ChEBI" id="CHEBI:78520"/>
        <dbReference type="ChEBI" id="CHEBI:78521"/>
        <dbReference type="ChEBI" id="CHEBI:456216"/>
        <dbReference type="EC" id="6.3.5.7"/>
    </reaction>
</comment>
<comment type="subunit">
    <text evidence="1">Heterotrimer of A, B and C subunits.</text>
</comment>
<comment type="similarity">
    <text evidence="1">Belongs to the amidase family. GatA subfamily.</text>
</comment>
<dbReference type="EC" id="6.3.5.7" evidence="1"/>
<dbReference type="EMBL" id="CP000437">
    <property type="protein sequence ID" value="ABI83544.1"/>
    <property type="molecule type" value="Genomic_DNA"/>
</dbReference>
<dbReference type="RefSeq" id="WP_003017412.1">
    <property type="nucleotide sequence ID" value="NC_017463.1"/>
</dbReference>
<dbReference type="SMR" id="Q0BK40"/>
<dbReference type="KEGG" id="fth:FTH_1777"/>
<dbReference type="GO" id="GO:0030956">
    <property type="term" value="C:glutamyl-tRNA(Gln) amidotransferase complex"/>
    <property type="evidence" value="ECO:0007669"/>
    <property type="project" value="InterPro"/>
</dbReference>
<dbReference type="GO" id="GO:0005524">
    <property type="term" value="F:ATP binding"/>
    <property type="evidence" value="ECO:0007669"/>
    <property type="project" value="UniProtKB-KW"/>
</dbReference>
<dbReference type="GO" id="GO:0050567">
    <property type="term" value="F:glutaminyl-tRNA synthase (glutamine-hydrolyzing) activity"/>
    <property type="evidence" value="ECO:0007669"/>
    <property type="project" value="UniProtKB-UniRule"/>
</dbReference>
<dbReference type="GO" id="GO:0006412">
    <property type="term" value="P:translation"/>
    <property type="evidence" value="ECO:0007669"/>
    <property type="project" value="UniProtKB-UniRule"/>
</dbReference>
<dbReference type="Gene3D" id="3.90.1300.10">
    <property type="entry name" value="Amidase signature (AS) domain"/>
    <property type="match status" value="1"/>
</dbReference>
<dbReference type="HAMAP" id="MF_00120">
    <property type="entry name" value="GatA"/>
    <property type="match status" value="1"/>
</dbReference>
<dbReference type="InterPro" id="IPR000120">
    <property type="entry name" value="Amidase"/>
</dbReference>
<dbReference type="InterPro" id="IPR020556">
    <property type="entry name" value="Amidase_CS"/>
</dbReference>
<dbReference type="InterPro" id="IPR023631">
    <property type="entry name" value="Amidase_dom"/>
</dbReference>
<dbReference type="InterPro" id="IPR036928">
    <property type="entry name" value="AS_sf"/>
</dbReference>
<dbReference type="InterPro" id="IPR004412">
    <property type="entry name" value="GatA"/>
</dbReference>
<dbReference type="NCBIfam" id="TIGR00132">
    <property type="entry name" value="gatA"/>
    <property type="match status" value="1"/>
</dbReference>
<dbReference type="PANTHER" id="PTHR11895:SF151">
    <property type="entry name" value="GLUTAMYL-TRNA(GLN) AMIDOTRANSFERASE SUBUNIT A"/>
    <property type="match status" value="1"/>
</dbReference>
<dbReference type="PANTHER" id="PTHR11895">
    <property type="entry name" value="TRANSAMIDASE"/>
    <property type="match status" value="1"/>
</dbReference>
<dbReference type="Pfam" id="PF01425">
    <property type="entry name" value="Amidase"/>
    <property type="match status" value="1"/>
</dbReference>
<dbReference type="SUPFAM" id="SSF75304">
    <property type="entry name" value="Amidase signature (AS) enzymes"/>
    <property type="match status" value="1"/>
</dbReference>
<dbReference type="PROSITE" id="PS00571">
    <property type="entry name" value="AMIDASES"/>
    <property type="match status" value="1"/>
</dbReference>
<accession>Q0BK40</accession>
<name>GATA_FRATO</name>